<evidence type="ECO:0000255" key="1">
    <source>
        <dbReference type="HAMAP-Rule" id="MF_00083"/>
    </source>
</evidence>
<dbReference type="EC" id="3.1.1.29" evidence="1"/>
<dbReference type="EMBL" id="CU928161">
    <property type="protein sequence ID" value="CAR02598.1"/>
    <property type="molecule type" value="Genomic_DNA"/>
</dbReference>
<dbReference type="RefSeq" id="WP_000152933.1">
    <property type="nucleotide sequence ID" value="NC_011742.1"/>
</dbReference>
<dbReference type="SMR" id="B7MKA6"/>
<dbReference type="GeneID" id="93775269"/>
<dbReference type="KEGG" id="ecz:ECS88_1272"/>
<dbReference type="HOGENOM" id="CLU_062456_3_1_6"/>
<dbReference type="Proteomes" id="UP000000747">
    <property type="component" value="Chromosome"/>
</dbReference>
<dbReference type="GO" id="GO:0005737">
    <property type="term" value="C:cytoplasm"/>
    <property type="evidence" value="ECO:0007669"/>
    <property type="project" value="UniProtKB-SubCell"/>
</dbReference>
<dbReference type="GO" id="GO:0004045">
    <property type="term" value="F:peptidyl-tRNA hydrolase activity"/>
    <property type="evidence" value="ECO:0007669"/>
    <property type="project" value="UniProtKB-UniRule"/>
</dbReference>
<dbReference type="GO" id="GO:0000049">
    <property type="term" value="F:tRNA binding"/>
    <property type="evidence" value="ECO:0007669"/>
    <property type="project" value="UniProtKB-UniRule"/>
</dbReference>
<dbReference type="GO" id="GO:0006515">
    <property type="term" value="P:protein quality control for misfolded or incompletely synthesized proteins"/>
    <property type="evidence" value="ECO:0007669"/>
    <property type="project" value="UniProtKB-UniRule"/>
</dbReference>
<dbReference type="GO" id="GO:0072344">
    <property type="term" value="P:rescue of stalled ribosome"/>
    <property type="evidence" value="ECO:0007669"/>
    <property type="project" value="UniProtKB-UniRule"/>
</dbReference>
<dbReference type="CDD" id="cd00462">
    <property type="entry name" value="PTH"/>
    <property type="match status" value="1"/>
</dbReference>
<dbReference type="FunFam" id="3.40.50.1470:FF:000001">
    <property type="entry name" value="Peptidyl-tRNA hydrolase"/>
    <property type="match status" value="1"/>
</dbReference>
<dbReference type="Gene3D" id="3.40.50.1470">
    <property type="entry name" value="Peptidyl-tRNA hydrolase"/>
    <property type="match status" value="1"/>
</dbReference>
<dbReference type="HAMAP" id="MF_00083">
    <property type="entry name" value="Pept_tRNA_hydro_bact"/>
    <property type="match status" value="1"/>
</dbReference>
<dbReference type="InterPro" id="IPR001328">
    <property type="entry name" value="Pept_tRNA_hydro"/>
</dbReference>
<dbReference type="InterPro" id="IPR018171">
    <property type="entry name" value="Pept_tRNA_hydro_CS"/>
</dbReference>
<dbReference type="InterPro" id="IPR036416">
    <property type="entry name" value="Pept_tRNA_hydro_sf"/>
</dbReference>
<dbReference type="NCBIfam" id="TIGR00447">
    <property type="entry name" value="pth"/>
    <property type="match status" value="1"/>
</dbReference>
<dbReference type="PANTHER" id="PTHR17224">
    <property type="entry name" value="PEPTIDYL-TRNA HYDROLASE"/>
    <property type="match status" value="1"/>
</dbReference>
<dbReference type="PANTHER" id="PTHR17224:SF1">
    <property type="entry name" value="PEPTIDYL-TRNA HYDROLASE"/>
    <property type="match status" value="1"/>
</dbReference>
<dbReference type="Pfam" id="PF01195">
    <property type="entry name" value="Pept_tRNA_hydro"/>
    <property type="match status" value="1"/>
</dbReference>
<dbReference type="SUPFAM" id="SSF53178">
    <property type="entry name" value="Peptidyl-tRNA hydrolase-like"/>
    <property type="match status" value="1"/>
</dbReference>
<dbReference type="PROSITE" id="PS01195">
    <property type="entry name" value="PEPT_TRNA_HYDROL_1"/>
    <property type="match status" value="1"/>
</dbReference>
<dbReference type="PROSITE" id="PS01196">
    <property type="entry name" value="PEPT_TRNA_HYDROL_2"/>
    <property type="match status" value="1"/>
</dbReference>
<name>PTH_ECO45</name>
<comment type="function">
    <text evidence="1">Hydrolyzes ribosome-free peptidyl-tRNAs (with 1 or more amino acids incorporated), which drop off the ribosome during protein synthesis, or as a result of ribosome stalling.</text>
</comment>
<comment type="function">
    <text evidence="1">Catalyzes the release of premature peptidyl moieties from peptidyl-tRNA molecules trapped in stalled 50S ribosomal subunits, and thus maintains levels of free tRNAs and 50S ribosomes.</text>
</comment>
<comment type="catalytic activity">
    <reaction evidence="1">
        <text>an N-acyl-L-alpha-aminoacyl-tRNA + H2O = an N-acyl-L-amino acid + a tRNA + H(+)</text>
        <dbReference type="Rhea" id="RHEA:54448"/>
        <dbReference type="Rhea" id="RHEA-COMP:10123"/>
        <dbReference type="Rhea" id="RHEA-COMP:13883"/>
        <dbReference type="ChEBI" id="CHEBI:15377"/>
        <dbReference type="ChEBI" id="CHEBI:15378"/>
        <dbReference type="ChEBI" id="CHEBI:59874"/>
        <dbReference type="ChEBI" id="CHEBI:78442"/>
        <dbReference type="ChEBI" id="CHEBI:138191"/>
        <dbReference type="EC" id="3.1.1.29"/>
    </reaction>
</comment>
<comment type="subunit">
    <text evidence="1">Monomer.</text>
</comment>
<comment type="subcellular location">
    <subcellularLocation>
        <location evidence="1">Cytoplasm</location>
    </subcellularLocation>
</comment>
<comment type="similarity">
    <text evidence="1">Belongs to the PTH family.</text>
</comment>
<protein>
    <recommendedName>
        <fullName evidence="1">Peptidyl-tRNA hydrolase</fullName>
        <shortName evidence="1">Pth</shortName>
        <ecNumber evidence="1">3.1.1.29</ecNumber>
    </recommendedName>
</protein>
<reference key="1">
    <citation type="journal article" date="2009" name="PLoS Genet.">
        <title>Organised genome dynamics in the Escherichia coli species results in highly diverse adaptive paths.</title>
        <authorList>
            <person name="Touchon M."/>
            <person name="Hoede C."/>
            <person name="Tenaillon O."/>
            <person name="Barbe V."/>
            <person name="Baeriswyl S."/>
            <person name="Bidet P."/>
            <person name="Bingen E."/>
            <person name="Bonacorsi S."/>
            <person name="Bouchier C."/>
            <person name="Bouvet O."/>
            <person name="Calteau A."/>
            <person name="Chiapello H."/>
            <person name="Clermont O."/>
            <person name="Cruveiller S."/>
            <person name="Danchin A."/>
            <person name="Diard M."/>
            <person name="Dossat C."/>
            <person name="Karoui M.E."/>
            <person name="Frapy E."/>
            <person name="Garry L."/>
            <person name="Ghigo J.M."/>
            <person name="Gilles A.M."/>
            <person name="Johnson J."/>
            <person name="Le Bouguenec C."/>
            <person name="Lescat M."/>
            <person name="Mangenot S."/>
            <person name="Martinez-Jehanne V."/>
            <person name="Matic I."/>
            <person name="Nassif X."/>
            <person name="Oztas S."/>
            <person name="Petit M.A."/>
            <person name="Pichon C."/>
            <person name="Rouy Z."/>
            <person name="Ruf C.S."/>
            <person name="Schneider D."/>
            <person name="Tourret J."/>
            <person name="Vacherie B."/>
            <person name="Vallenet D."/>
            <person name="Medigue C."/>
            <person name="Rocha E.P.C."/>
            <person name="Denamur E."/>
        </authorList>
    </citation>
    <scope>NUCLEOTIDE SEQUENCE [LARGE SCALE GENOMIC DNA]</scope>
    <source>
        <strain>S88 / ExPEC</strain>
    </source>
</reference>
<accession>B7MKA6</accession>
<gene>
    <name evidence="1" type="primary">pth</name>
    <name type="ordered locus">ECS88_1272</name>
</gene>
<keyword id="KW-0963">Cytoplasm</keyword>
<keyword id="KW-0378">Hydrolase</keyword>
<keyword id="KW-1185">Reference proteome</keyword>
<keyword id="KW-0694">RNA-binding</keyword>
<keyword id="KW-0820">tRNA-binding</keyword>
<organism>
    <name type="scientific">Escherichia coli O45:K1 (strain S88 / ExPEC)</name>
    <dbReference type="NCBI Taxonomy" id="585035"/>
    <lineage>
        <taxon>Bacteria</taxon>
        <taxon>Pseudomonadati</taxon>
        <taxon>Pseudomonadota</taxon>
        <taxon>Gammaproteobacteria</taxon>
        <taxon>Enterobacterales</taxon>
        <taxon>Enterobacteriaceae</taxon>
        <taxon>Escherichia</taxon>
    </lineage>
</organism>
<proteinExistence type="inferred from homology"/>
<sequence length="194" mass="21082">MTIKLIVGLANPGAEYAATRHNAGAWFVDLLAERLRAPLREEAKFFGYTSRVTLGGEDVRLLVPTTFMNLSGKAVAAMASFFRINPDEILVAHDELDLPPGVAKFKLGGGHGGHNGLKDIISKLGNNPNFHRLRIGIGHPGDKNKVVGFVLGKPPVSEQKLIDEAIDEAARCTEMWFTDGLTKATNRLHAFKAQ</sequence>
<feature type="chain" id="PRO_1000192968" description="Peptidyl-tRNA hydrolase">
    <location>
        <begin position="1"/>
        <end position="194"/>
    </location>
</feature>
<feature type="active site" description="Proton acceptor" evidence="1">
    <location>
        <position position="21"/>
    </location>
</feature>
<feature type="binding site" evidence="1">
    <location>
        <position position="16"/>
    </location>
    <ligand>
        <name>tRNA</name>
        <dbReference type="ChEBI" id="CHEBI:17843"/>
    </ligand>
</feature>
<feature type="binding site" evidence="1">
    <location>
        <position position="67"/>
    </location>
    <ligand>
        <name>tRNA</name>
        <dbReference type="ChEBI" id="CHEBI:17843"/>
    </ligand>
</feature>
<feature type="binding site" evidence="1">
    <location>
        <position position="69"/>
    </location>
    <ligand>
        <name>tRNA</name>
        <dbReference type="ChEBI" id="CHEBI:17843"/>
    </ligand>
</feature>
<feature type="binding site" evidence="1">
    <location>
        <position position="115"/>
    </location>
    <ligand>
        <name>tRNA</name>
        <dbReference type="ChEBI" id="CHEBI:17843"/>
    </ligand>
</feature>
<feature type="site" description="Discriminates between blocked and unblocked aminoacyl-tRNA" evidence="1">
    <location>
        <position position="11"/>
    </location>
</feature>
<feature type="site" description="Stabilizes the basic form of H active site to accept a proton" evidence="1">
    <location>
        <position position="94"/>
    </location>
</feature>